<sequence length="457" mass="50212">MRIAEWKEKVESQGCYDAVSEMLERIEKSRLNAYITVCKDEALKMAEKYDRGELKGRLAGIPVAVKDNISTKGILTTCASKMLSNYRPVFDAHVVEKLKQEGAIIIGKANMDEFAMGTTTETSYFGVVRNPHDEARVAGGSSGGSGAVIAADEAVLSLGSDTGGSIRCPASFCGVYGLKPTYGLVSRYGLIPYANSLEQIGPMADSIEDLALLLEVIAGKDTRDSTNAGREFRFEPEDRKLRVGIIAEMGGNDDVMKRFNEAVEVIREKHEVGEVSMPSFKYALAAYYIIAMSEASSNLARYDGVRYGFALEKLDSWRRYFSKVRAEGFGDEVKRRIMLGSYALSAGYYGKYYLKAQKVRTLVIRDFKKAFEEYDVLISPTMPALPFKIGELADPLTMYKADVNTVPVNLAGLPALSVPVGMVKGLPVGLQVIGNYFSENTLLNFGKWVGERFGEGD</sequence>
<feature type="chain" id="PRO_0000105229" description="Glutamyl-tRNA(Gln) amidotransferase subunit A">
    <location>
        <begin position="1"/>
        <end position="457"/>
    </location>
</feature>
<feature type="active site" description="Charge relay system" evidence="1">
    <location>
        <position position="66"/>
    </location>
</feature>
<feature type="active site" description="Charge relay system" evidence="1">
    <location>
        <position position="141"/>
    </location>
</feature>
<feature type="active site" description="Acyl-ester intermediate" evidence="1">
    <location>
        <position position="165"/>
    </location>
</feature>
<organism>
    <name type="scientific">Archaeoglobus fulgidus (strain ATCC 49558 / DSM 4304 / JCM 9628 / NBRC 100126 / VC-16)</name>
    <dbReference type="NCBI Taxonomy" id="224325"/>
    <lineage>
        <taxon>Archaea</taxon>
        <taxon>Methanobacteriati</taxon>
        <taxon>Methanobacteriota</taxon>
        <taxon>Archaeoglobi</taxon>
        <taxon>Archaeoglobales</taxon>
        <taxon>Archaeoglobaceae</taxon>
        <taxon>Archaeoglobus</taxon>
    </lineage>
</organism>
<accession>O27955</accession>
<comment type="function">
    <text evidence="1">Allows the formation of correctly charged Gln-tRNA(Gln) through the transamidation of misacylated Glu-tRNA(Gln) in organisms which lack glutaminyl-tRNA synthetase. The reaction takes place in the presence of glutamine and ATP through an activated gamma-phospho-Glu-tRNA(Gln) (By similarity).</text>
</comment>
<comment type="catalytic activity">
    <reaction>
        <text>L-glutamyl-tRNA(Gln) + L-glutamine + ATP + H2O = L-glutaminyl-tRNA(Gln) + L-glutamate + ADP + phosphate + H(+)</text>
        <dbReference type="Rhea" id="RHEA:17521"/>
        <dbReference type="Rhea" id="RHEA-COMP:9681"/>
        <dbReference type="Rhea" id="RHEA-COMP:9684"/>
        <dbReference type="ChEBI" id="CHEBI:15377"/>
        <dbReference type="ChEBI" id="CHEBI:15378"/>
        <dbReference type="ChEBI" id="CHEBI:29985"/>
        <dbReference type="ChEBI" id="CHEBI:30616"/>
        <dbReference type="ChEBI" id="CHEBI:43474"/>
        <dbReference type="ChEBI" id="CHEBI:58359"/>
        <dbReference type="ChEBI" id="CHEBI:78520"/>
        <dbReference type="ChEBI" id="CHEBI:78521"/>
        <dbReference type="ChEBI" id="CHEBI:456216"/>
        <dbReference type="EC" id="6.3.5.7"/>
    </reaction>
</comment>
<comment type="subunit">
    <text evidence="1">Heterotrimer of A, B and C subunits.</text>
</comment>
<comment type="similarity">
    <text evidence="2">Belongs to the amidase family. GatA subfamily.</text>
</comment>
<protein>
    <recommendedName>
        <fullName>Glutamyl-tRNA(Gln) amidotransferase subunit A</fullName>
        <shortName>Glu-ADT subunit A</shortName>
        <ecNumber>6.3.5.7</ecNumber>
    </recommendedName>
</protein>
<name>GATA_ARCFU</name>
<gene>
    <name type="primary">gatA</name>
    <name type="ordered locus">AF_2329</name>
</gene>
<dbReference type="EC" id="6.3.5.7"/>
<dbReference type="EMBL" id="AE000782">
    <property type="protein sequence ID" value="AAB88921.1"/>
    <property type="molecule type" value="Genomic_DNA"/>
</dbReference>
<dbReference type="PIR" id="A69541">
    <property type="entry name" value="A69541"/>
</dbReference>
<dbReference type="RefSeq" id="WP_010879818.1">
    <property type="nucleotide sequence ID" value="NC_000917.1"/>
</dbReference>
<dbReference type="SMR" id="O27955"/>
<dbReference type="STRING" id="224325.AF_2329"/>
<dbReference type="PaxDb" id="224325-AF_2329"/>
<dbReference type="EnsemblBacteria" id="AAB88921">
    <property type="protein sequence ID" value="AAB88921"/>
    <property type="gene ID" value="AF_2329"/>
</dbReference>
<dbReference type="GeneID" id="24796094"/>
<dbReference type="KEGG" id="afu:AF_2329"/>
<dbReference type="eggNOG" id="arCOG01717">
    <property type="taxonomic scope" value="Archaea"/>
</dbReference>
<dbReference type="HOGENOM" id="CLU_009600_0_3_2"/>
<dbReference type="OrthoDB" id="7931at2157"/>
<dbReference type="PhylomeDB" id="O27955"/>
<dbReference type="Proteomes" id="UP000002199">
    <property type="component" value="Chromosome"/>
</dbReference>
<dbReference type="GO" id="GO:0030956">
    <property type="term" value="C:glutamyl-tRNA(Gln) amidotransferase complex"/>
    <property type="evidence" value="ECO:0007669"/>
    <property type="project" value="InterPro"/>
</dbReference>
<dbReference type="GO" id="GO:0005524">
    <property type="term" value="F:ATP binding"/>
    <property type="evidence" value="ECO:0007669"/>
    <property type="project" value="UniProtKB-KW"/>
</dbReference>
<dbReference type="GO" id="GO:0050567">
    <property type="term" value="F:glutaminyl-tRNA synthase (glutamine-hydrolyzing) activity"/>
    <property type="evidence" value="ECO:0007669"/>
    <property type="project" value="UniProtKB-UniRule"/>
</dbReference>
<dbReference type="GO" id="GO:0006412">
    <property type="term" value="P:translation"/>
    <property type="evidence" value="ECO:0007669"/>
    <property type="project" value="UniProtKB-UniRule"/>
</dbReference>
<dbReference type="Gene3D" id="3.90.1300.10">
    <property type="entry name" value="Amidase signature (AS) domain"/>
    <property type="match status" value="1"/>
</dbReference>
<dbReference type="HAMAP" id="MF_00120">
    <property type="entry name" value="GatA"/>
    <property type="match status" value="1"/>
</dbReference>
<dbReference type="InterPro" id="IPR000120">
    <property type="entry name" value="Amidase"/>
</dbReference>
<dbReference type="InterPro" id="IPR020556">
    <property type="entry name" value="Amidase_CS"/>
</dbReference>
<dbReference type="InterPro" id="IPR023631">
    <property type="entry name" value="Amidase_dom"/>
</dbReference>
<dbReference type="InterPro" id="IPR036928">
    <property type="entry name" value="AS_sf"/>
</dbReference>
<dbReference type="InterPro" id="IPR004412">
    <property type="entry name" value="GatA"/>
</dbReference>
<dbReference type="NCBIfam" id="TIGR00132">
    <property type="entry name" value="gatA"/>
    <property type="match status" value="1"/>
</dbReference>
<dbReference type="PANTHER" id="PTHR11895:SF7">
    <property type="entry name" value="GLUTAMYL-TRNA(GLN) AMIDOTRANSFERASE SUBUNIT A, MITOCHONDRIAL"/>
    <property type="match status" value="1"/>
</dbReference>
<dbReference type="PANTHER" id="PTHR11895">
    <property type="entry name" value="TRANSAMIDASE"/>
    <property type="match status" value="1"/>
</dbReference>
<dbReference type="Pfam" id="PF01425">
    <property type="entry name" value="Amidase"/>
    <property type="match status" value="1"/>
</dbReference>
<dbReference type="SUPFAM" id="SSF75304">
    <property type="entry name" value="Amidase signature (AS) enzymes"/>
    <property type="match status" value="1"/>
</dbReference>
<dbReference type="PROSITE" id="PS00571">
    <property type="entry name" value="AMIDASES"/>
    <property type="match status" value="1"/>
</dbReference>
<evidence type="ECO:0000250" key="1"/>
<evidence type="ECO:0000305" key="2"/>
<proteinExistence type="inferred from homology"/>
<keyword id="KW-0067">ATP-binding</keyword>
<keyword id="KW-0436">Ligase</keyword>
<keyword id="KW-0547">Nucleotide-binding</keyword>
<keyword id="KW-0648">Protein biosynthesis</keyword>
<keyword id="KW-1185">Reference proteome</keyword>
<reference key="1">
    <citation type="journal article" date="1997" name="Nature">
        <title>The complete genome sequence of the hyperthermophilic, sulphate-reducing archaeon Archaeoglobus fulgidus.</title>
        <authorList>
            <person name="Klenk H.-P."/>
            <person name="Clayton R.A."/>
            <person name="Tomb J.-F."/>
            <person name="White O."/>
            <person name="Nelson K.E."/>
            <person name="Ketchum K.A."/>
            <person name="Dodson R.J."/>
            <person name="Gwinn M.L."/>
            <person name="Hickey E.K."/>
            <person name="Peterson J.D."/>
            <person name="Richardson D.L."/>
            <person name="Kerlavage A.R."/>
            <person name="Graham D.E."/>
            <person name="Kyrpides N.C."/>
            <person name="Fleischmann R.D."/>
            <person name="Quackenbush J."/>
            <person name="Lee N.H."/>
            <person name="Sutton G.G."/>
            <person name="Gill S.R."/>
            <person name="Kirkness E.F."/>
            <person name="Dougherty B.A."/>
            <person name="McKenney K."/>
            <person name="Adams M.D."/>
            <person name="Loftus B.J."/>
            <person name="Peterson S.N."/>
            <person name="Reich C.I."/>
            <person name="McNeil L.K."/>
            <person name="Badger J.H."/>
            <person name="Glodek A."/>
            <person name="Zhou L."/>
            <person name="Overbeek R."/>
            <person name="Gocayne J.D."/>
            <person name="Weidman J.F."/>
            <person name="McDonald L.A."/>
            <person name="Utterback T.R."/>
            <person name="Cotton M.D."/>
            <person name="Spriggs T."/>
            <person name="Artiach P."/>
            <person name="Kaine B.P."/>
            <person name="Sykes S.M."/>
            <person name="Sadow P.W."/>
            <person name="D'Andrea K.P."/>
            <person name="Bowman C."/>
            <person name="Fujii C."/>
            <person name="Garland S.A."/>
            <person name="Mason T.M."/>
            <person name="Olsen G.J."/>
            <person name="Fraser C.M."/>
            <person name="Smith H.O."/>
            <person name="Woese C.R."/>
            <person name="Venter J.C."/>
        </authorList>
    </citation>
    <scope>NUCLEOTIDE SEQUENCE [LARGE SCALE GENOMIC DNA]</scope>
    <source>
        <strain>ATCC 49558 / DSM 4304 / JCM 9628 / NBRC 100126 / VC-16</strain>
    </source>
</reference>